<dbReference type="EMBL" id="CU928169">
    <property type="protein sequence ID" value="CAR23100.1"/>
    <property type="molecule type" value="Genomic_DNA"/>
</dbReference>
<dbReference type="RefSeq" id="XP_002553537.1">
    <property type="nucleotide sequence ID" value="XM_002553491.1"/>
</dbReference>
<dbReference type="SMR" id="C5DH39"/>
<dbReference type="FunCoup" id="C5DH39">
    <property type="interactions" value="69"/>
</dbReference>
<dbReference type="STRING" id="559295.C5DH39"/>
<dbReference type="GeneID" id="8291675"/>
<dbReference type="KEGG" id="lth:KLTH0E01122g"/>
<dbReference type="eggNOG" id="ENOG502QY5V">
    <property type="taxonomic scope" value="Eukaryota"/>
</dbReference>
<dbReference type="HOGENOM" id="CLU_039418_0_0_1"/>
<dbReference type="InParanoid" id="C5DH39"/>
<dbReference type="OMA" id="IPICQPG"/>
<dbReference type="OrthoDB" id="4066282at2759"/>
<dbReference type="Proteomes" id="UP000002036">
    <property type="component" value="Chromosome E"/>
</dbReference>
<dbReference type="GO" id="GO:0005741">
    <property type="term" value="C:mitochondrial outer membrane"/>
    <property type="evidence" value="ECO:0007669"/>
    <property type="project" value="UniProtKB-SubCell"/>
</dbReference>
<dbReference type="GO" id="GO:0034045">
    <property type="term" value="C:phagophore assembly site membrane"/>
    <property type="evidence" value="ECO:0007669"/>
    <property type="project" value="UniProtKB-SubCell"/>
</dbReference>
<dbReference type="GO" id="GO:0005774">
    <property type="term" value="C:vacuolar membrane"/>
    <property type="evidence" value="ECO:0007669"/>
    <property type="project" value="UniProtKB-SubCell"/>
</dbReference>
<dbReference type="GO" id="GO:0006914">
    <property type="term" value="P:autophagy"/>
    <property type="evidence" value="ECO:0007669"/>
    <property type="project" value="UniProtKB-KW"/>
</dbReference>
<dbReference type="CDD" id="cd19929">
    <property type="entry name" value="psREC_Atg32"/>
    <property type="match status" value="1"/>
</dbReference>
<feature type="chain" id="PRO_0000399759" description="Autophagy-related protein 32">
    <location>
        <begin position="1"/>
        <end position="472"/>
    </location>
</feature>
<feature type="transmembrane region" description="Helical" evidence="2">
    <location>
        <begin position="356"/>
        <end position="372"/>
    </location>
</feature>
<feature type="region of interest" description="Disordered" evidence="3">
    <location>
        <begin position="1"/>
        <end position="35"/>
    </location>
</feature>
<feature type="region of interest" description="Disordered" evidence="3">
    <location>
        <begin position="58"/>
        <end position="80"/>
    </location>
</feature>
<feature type="region of interest" description="Disordered" evidence="3">
    <location>
        <begin position="113"/>
        <end position="139"/>
    </location>
</feature>
<feature type="compositionally biased region" description="Basic and acidic residues" evidence="3">
    <location>
        <begin position="58"/>
        <end position="68"/>
    </location>
</feature>
<feature type="compositionally biased region" description="Polar residues" evidence="3">
    <location>
        <begin position="129"/>
        <end position="139"/>
    </location>
</feature>
<keyword id="KW-0072">Autophagy</keyword>
<keyword id="KW-0472">Membrane</keyword>
<keyword id="KW-0496">Mitochondrion</keyword>
<keyword id="KW-1000">Mitochondrion outer membrane</keyword>
<keyword id="KW-1185">Reference proteome</keyword>
<keyword id="KW-0812">Transmembrane</keyword>
<keyword id="KW-1133">Transmembrane helix</keyword>
<keyword id="KW-0926">Vacuole</keyword>
<sequence>MSQYITNPRQQSRQLRRNSPSGQEPHFATSSVPLNQRNSILDPHLSVLQLLDRADPPSELSSLKHGEIAKPATPRRSGFESVNCSISESWQSIKHTDCSMVNTQGDATHQHAGILSSSDTSEDEPDAQLSPSPNNFAFPNSATSIFPEAPHNLEASSLREYQNSEIANPREENDNETVTMSLMNSSNSFVMPKLSLIQQSQKFCILIVGKPAQRFYRDIPRAYHKMFEVRDVGHLSPREMNKYSAVMVIFGEPKEGKELLEKVAAHNSNIIAVCQRGQQQQISNILNRYSKSNEIRLVYHLTVMSDHQDVHRLLRYLNTLSTEVDSGYETEVGSRKIRKRRKSSKKRSPQITVNRWVIWSISLTVGVGLGYCISCLLSSTSSTLSVTLRSGDEVTIMEDIHNSPHESPFDNYLRHLLLAVKRAVKQVNSSFKQYLSGQSLPVLWMQRIGKEWLSEASDPTLPGVTALDLVLV</sequence>
<comment type="function">
    <text evidence="1">Mitophagy-specific receptor that recruits the autophagic machinery to mitochondria and regulates selective degradation of mitochondria. Mitophagy contributes to regulate mitochondrial quantity and quality by eliminating the mitochondria to a basal level to fulfill cellular energy requirements and preventing excess ROS production. Recruits ATG11 to the surface of mitochondria. Also promotes autophagy-dependent peroxisome degradation (By similarity).</text>
</comment>
<comment type="subcellular location">
    <subcellularLocation>
        <location evidence="1">Mitochondrion outer membrane</location>
        <topology evidence="1">Single-pass membrane protein</topology>
    </subcellularLocation>
    <subcellularLocation>
        <location evidence="1">Vacuole membrane</location>
        <topology evidence="1">Single-pass membrane protein</topology>
    </subcellularLocation>
    <subcellularLocation>
        <location evidence="1">Preautophagosomal structure membrane</location>
        <topology evidence="1">Single-pass membrane protein</topology>
    </subcellularLocation>
    <text evidence="1">Is recruited to the preautophagosomal structure during mitophagy and imported into the vacuole along with mitochondria during starvation.</text>
</comment>
<comment type="similarity">
    <text evidence="4">Belongs to the ATG32 family.</text>
</comment>
<name>ATG32_LACTC</name>
<organism>
    <name type="scientific">Lachancea thermotolerans (strain ATCC 56472 / CBS 6340 / NRRL Y-8284)</name>
    <name type="common">Yeast</name>
    <name type="synonym">Kluyveromyces thermotolerans</name>
    <dbReference type="NCBI Taxonomy" id="559295"/>
    <lineage>
        <taxon>Eukaryota</taxon>
        <taxon>Fungi</taxon>
        <taxon>Dikarya</taxon>
        <taxon>Ascomycota</taxon>
        <taxon>Saccharomycotina</taxon>
        <taxon>Saccharomycetes</taxon>
        <taxon>Saccharomycetales</taxon>
        <taxon>Saccharomycetaceae</taxon>
        <taxon>Lachancea</taxon>
    </lineage>
</organism>
<evidence type="ECO:0000250" key="1"/>
<evidence type="ECO:0000255" key="2"/>
<evidence type="ECO:0000256" key="3">
    <source>
        <dbReference type="SAM" id="MobiDB-lite"/>
    </source>
</evidence>
<evidence type="ECO:0000305" key="4"/>
<protein>
    <recommendedName>
        <fullName>Autophagy-related protein 32</fullName>
    </recommendedName>
</protein>
<accession>C5DH39</accession>
<reference key="1">
    <citation type="journal article" date="2009" name="Genome Res.">
        <title>Comparative genomics of protoploid Saccharomycetaceae.</title>
        <authorList>
            <consortium name="The Genolevures Consortium"/>
            <person name="Souciet J.-L."/>
            <person name="Dujon B."/>
            <person name="Gaillardin C."/>
            <person name="Johnston M."/>
            <person name="Baret P.V."/>
            <person name="Cliften P."/>
            <person name="Sherman D.J."/>
            <person name="Weissenbach J."/>
            <person name="Westhof E."/>
            <person name="Wincker P."/>
            <person name="Jubin C."/>
            <person name="Poulain J."/>
            <person name="Barbe V."/>
            <person name="Segurens B."/>
            <person name="Artiguenave F."/>
            <person name="Anthouard V."/>
            <person name="Vacherie B."/>
            <person name="Val M.-E."/>
            <person name="Fulton R.S."/>
            <person name="Minx P."/>
            <person name="Wilson R."/>
            <person name="Durrens P."/>
            <person name="Jean G."/>
            <person name="Marck C."/>
            <person name="Martin T."/>
            <person name="Nikolski M."/>
            <person name="Rolland T."/>
            <person name="Seret M.-L."/>
            <person name="Casaregola S."/>
            <person name="Despons L."/>
            <person name="Fairhead C."/>
            <person name="Fischer G."/>
            <person name="Lafontaine I."/>
            <person name="Leh V."/>
            <person name="Lemaire M."/>
            <person name="de Montigny J."/>
            <person name="Neuveglise C."/>
            <person name="Thierry A."/>
            <person name="Blanc-Lenfle I."/>
            <person name="Bleykasten C."/>
            <person name="Diffels J."/>
            <person name="Fritsch E."/>
            <person name="Frangeul L."/>
            <person name="Goeffon A."/>
            <person name="Jauniaux N."/>
            <person name="Kachouri-Lafond R."/>
            <person name="Payen C."/>
            <person name="Potier S."/>
            <person name="Pribylova L."/>
            <person name="Ozanne C."/>
            <person name="Richard G.-F."/>
            <person name="Sacerdot C."/>
            <person name="Straub M.-L."/>
            <person name="Talla E."/>
        </authorList>
    </citation>
    <scope>NUCLEOTIDE SEQUENCE [LARGE SCALE GENOMIC DNA]</scope>
    <source>
        <strain>ATCC 56472 / CBS 6340 / NRRL Y-8284</strain>
    </source>
</reference>
<gene>
    <name type="primary">ATG32</name>
    <name type="ordered locus">KLTH0E01122g</name>
</gene>
<proteinExistence type="inferred from homology"/>